<proteinExistence type="inferred from homology"/>
<name>HIS5_BLOPB</name>
<organism>
    <name type="scientific">Blochmanniella pennsylvanica (strain BPEN)</name>
    <dbReference type="NCBI Taxonomy" id="291272"/>
    <lineage>
        <taxon>Bacteria</taxon>
        <taxon>Pseudomonadati</taxon>
        <taxon>Pseudomonadota</taxon>
        <taxon>Gammaproteobacteria</taxon>
        <taxon>Enterobacterales</taxon>
        <taxon>Enterobacteriaceae</taxon>
        <taxon>ant endosymbionts</taxon>
        <taxon>Candidatus Blochmanniella</taxon>
    </lineage>
</organism>
<feature type="chain" id="PRO_0000231706" description="Imidazole glycerol phosphate synthase subunit HisH">
    <location>
        <begin position="1"/>
        <end position="196"/>
    </location>
</feature>
<feature type="domain" description="Glutamine amidotransferase type-1" evidence="1">
    <location>
        <begin position="2"/>
        <end position="196"/>
    </location>
</feature>
<feature type="active site" description="Nucleophile" evidence="1">
    <location>
        <position position="77"/>
    </location>
</feature>
<feature type="active site" evidence="1">
    <location>
        <position position="178"/>
    </location>
</feature>
<feature type="active site" evidence="1">
    <location>
        <position position="180"/>
    </location>
</feature>
<dbReference type="EC" id="4.3.2.10" evidence="1"/>
<dbReference type="EC" id="3.5.1.2" evidence="1"/>
<dbReference type="EMBL" id="CP000016">
    <property type="protein sequence ID" value="AAZ41258.1"/>
    <property type="molecule type" value="Genomic_DNA"/>
</dbReference>
<dbReference type="SMR" id="Q492K0"/>
<dbReference type="STRING" id="291272.BPEN_481"/>
<dbReference type="KEGG" id="bpn:BPEN_481"/>
<dbReference type="eggNOG" id="COG0118">
    <property type="taxonomic scope" value="Bacteria"/>
</dbReference>
<dbReference type="HOGENOM" id="CLU_2932600_0_0_6"/>
<dbReference type="UniPathway" id="UPA00031">
    <property type="reaction ID" value="UER00010"/>
</dbReference>
<dbReference type="Proteomes" id="UP000007794">
    <property type="component" value="Chromosome"/>
</dbReference>
<dbReference type="GO" id="GO:0005737">
    <property type="term" value="C:cytoplasm"/>
    <property type="evidence" value="ECO:0007669"/>
    <property type="project" value="UniProtKB-SubCell"/>
</dbReference>
<dbReference type="GO" id="GO:0004359">
    <property type="term" value="F:glutaminase activity"/>
    <property type="evidence" value="ECO:0007669"/>
    <property type="project" value="UniProtKB-EC"/>
</dbReference>
<dbReference type="GO" id="GO:0000107">
    <property type="term" value="F:imidazoleglycerol-phosphate synthase activity"/>
    <property type="evidence" value="ECO:0007669"/>
    <property type="project" value="UniProtKB-UniRule"/>
</dbReference>
<dbReference type="GO" id="GO:0016829">
    <property type="term" value="F:lyase activity"/>
    <property type="evidence" value="ECO:0007669"/>
    <property type="project" value="UniProtKB-KW"/>
</dbReference>
<dbReference type="GO" id="GO:0000105">
    <property type="term" value="P:L-histidine biosynthetic process"/>
    <property type="evidence" value="ECO:0007669"/>
    <property type="project" value="UniProtKB-UniRule"/>
</dbReference>
<dbReference type="CDD" id="cd01748">
    <property type="entry name" value="GATase1_IGP_Synthase"/>
    <property type="match status" value="1"/>
</dbReference>
<dbReference type="FunFam" id="3.40.50.880:FF:000009">
    <property type="entry name" value="Imidazole glycerol phosphate synthase subunit HisH"/>
    <property type="match status" value="1"/>
</dbReference>
<dbReference type="Gene3D" id="3.40.50.880">
    <property type="match status" value="1"/>
</dbReference>
<dbReference type="HAMAP" id="MF_00278">
    <property type="entry name" value="HisH"/>
    <property type="match status" value="1"/>
</dbReference>
<dbReference type="InterPro" id="IPR029062">
    <property type="entry name" value="Class_I_gatase-like"/>
</dbReference>
<dbReference type="InterPro" id="IPR017926">
    <property type="entry name" value="GATASE"/>
</dbReference>
<dbReference type="InterPro" id="IPR010139">
    <property type="entry name" value="Imidazole-glycPsynth_HisH"/>
</dbReference>
<dbReference type="NCBIfam" id="TIGR01855">
    <property type="entry name" value="IMP_synth_hisH"/>
    <property type="match status" value="1"/>
</dbReference>
<dbReference type="PANTHER" id="PTHR42701">
    <property type="entry name" value="IMIDAZOLE GLYCEROL PHOSPHATE SYNTHASE SUBUNIT HISH"/>
    <property type="match status" value="1"/>
</dbReference>
<dbReference type="PANTHER" id="PTHR42701:SF1">
    <property type="entry name" value="IMIDAZOLE GLYCEROL PHOSPHATE SYNTHASE SUBUNIT HISH"/>
    <property type="match status" value="1"/>
</dbReference>
<dbReference type="Pfam" id="PF00117">
    <property type="entry name" value="GATase"/>
    <property type="match status" value="1"/>
</dbReference>
<dbReference type="PIRSF" id="PIRSF000495">
    <property type="entry name" value="Amidotransf_hisH"/>
    <property type="match status" value="1"/>
</dbReference>
<dbReference type="SUPFAM" id="SSF52317">
    <property type="entry name" value="Class I glutamine amidotransferase-like"/>
    <property type="match status" value="1"/>
</dbReference>
<dbReference type="PROSITE" id="PS51273">
    <property type="entry name" value="GATASE_TYPE_1"/>
    <property type="match status" value="1"/>
</dbReference>
<comment type="function">
    <text evidence="1">IGPS catalyzes the conversion of PRFAR and glutamine to IGP, AICAR and glutamate. The HisH subunit catalyzes the hydrolysis of glutamine to glutamate and ammonia as part of the synthesis of IGP and AICAR. The resulting ammonia molecule is channeled to the active site of HisF.</text>
</comment>
<comment type="catalytic activity">
    <reaction evidence="1">
        <text>5-[(5-phospho-1-deoxy-D-ribulos-1-ylimino)methylamino]-1-(5-phospho-beta-D-ribosyl)imidazole-4-carboxamide + L-glutamine = D-erythro-1-(imidazol-4-yl)glycerol 3-phosphate + 5-amino-1-(5-phospho-beta-D-ribosyl)imidazole-4-carboxamide + L-glutamate + H(+)</text>
        <dbReference type="Rhea" id="RHEA:24793"/>
        <dbReference type="ChEBI" id="CHEBI:15378"/>
        <dbReference type="ChEBI" id="CHEBI:29985"/>
        <dbReference type="ChEBI" id="CHEBI:58278"/>
        <dbReference type="ChEBI" id="CHEBI:58359"/>
        <dbReference type="ChEBI" id="CHEBI:58475"/>
        <dbReference type="ChEBI" id="CHEBI:58525"/>
        <dbReference type="EC" id="4.3.2.10"/>
    </reaction>
</comment>
<comment type="catalytic activity">
    <reaction evidence="1">
        <text>L-glutamine + H2O = L-glutamate + NH4(+)</text>
        <dbReference type="Rhea" id="RHEA:15889"/>
        <dbReference type="ChEBI" id="CHEBI:15377"/>
        <dbReference type="ChEBI" id="CHEBI:28938"/>
        <dbReference type="ChEBI" id="CHEBI:29985"/>
        <dbReference type="ChEBI" id="CHEBI:58359"/>
        <dbReference type="EC" id="3.5.1.2"/>
    </reaction>
</comment>
<comment type="pathway">
    <text evidence="1">Amino-acid biosynthesis; L-histidine biosynthesis; L-histidine from 5-phospho-alpha-D-ribose 1-diphosphate: step 5/9.</text>
</comment>
<comment type="subunit">
    <text evidence="1">Heterodimer of HisH and HisF.</text>
</comment>
<comment type="subcellular location">
    <subcellularLocation>
        <location evidence="1">Cytoplasm</location>
    </subcellularLocation>
</comment>
<protein>
    <recommendedName>
        <fullName evidence="1">Imidazole glycerol phosphate synthase subunit HisH</fullName>
        <ecNumber evidence="1">4.3.2.10</ecNumber>
    </recommendedName>
    <alternativeName>
        <fullName evidence="1">IGP synthase glutaminase subunit</fullName>
        <ecNumber evidence="1">3.5.1.2</ecNumber>
    </alternativeName>
    <alternativeName>
        <fullName evidence="1">IGP synthase subunit HisH</fullName>
    </alternativeName>
    <alternativeName>
        <fullName evidence="1">ImGP synthase subunit HisH</fullName>
        <shortName evidence="1">IGPS subunit HisH</shortName>
    </alternativeName>
</protein>
<keyword id="KW-0028">Amino-acid biosynthesis</keyword>
<keyword id="KW-0963">Cytoplasm</keyword>
<keyword id="KW-0315">Glutamine amidotransferase</keyword>
<keyword id="KW-0368">Histidine biosynthesis</keyword>
<keyword id="KW-0378">Hydrolase</keyword>
<keyword id="KW-0456">Lyase</keyword>
<keyword id="KW-1185">Reference proteome</keyword>
<reference key="1">
    <citation type="journal article" date="2005" name="Genome Res.">
        <title>Genome sequence of Blochmannia pennsylvanicus indicates parallel evolutionary trends among bacterial mutualists of insects.</title>
        <authorList>
            <person name="Degnan P.H."/>
            <person name="Lazarus A.B."/>
            <person name="Wernegreen J.J."/>
        </authorList>
    </citation>
    <scope>NUCLEOTIDE SEQUENCE [LARGE SCALE GENOMIC DNA]</scope>
    <source>
        <strain>BPEN</strain>
    </source>
</reference>
<sequence>MNIVIIDTNCSNLLSVKTMLHRLGHNPIISDRADVISQADKLFLPGVGTASSAMKQLKKKNLITLIQNCTKPILGICLGMQLFGSISSENNGVNTLNIIHTPVKRMQYHGFPLPHMGWNTITIPKKHFLFYGIKENDYFYFAHSYCIKVCSVTISQTNYGQLFSSVIKYKNFFGVQFHPEKSGMPGQQLVKNFLEI</sequence>
<evidence type="ECO:0000255" key="1">
    <source>
        <dbReference type="HAMAP-Rule" id="MF_00278"/>
    </source>
</evidence>
<gene>
    <name evidence="1" type="primary">hisH</name>
    <name type="ordered locus">BPEN_481</name>
</gene>
<accession>Q492K0</accession>